<evidence type="ECO:0000255" key="1">
    <source>
        <dbReference type="HAMAP-Rule" id="MF_00151"/>
    </source>
</evidence>
<sequence>MTCLYPGTFDPITNGHLDVIKRALKIFDEVIVAIAKSEHKKPCYDLEKRKELALLATQNLKNVKIIAFDNLLVDLAKELKVNTIIRGLRAVSDFEYELQIGYANHALWEDMETIYLMPSLKHAFISSSIVRSIVAHGGDVSSLVPKEILPFLKDQSCM</sequence>
<feature type="chain" id="PRO_0000156189" description="Phosphopantetheine adenylyltransferase">
    <location>
        <begin position="1"/>
        <end position="158"/>
    </location>
</feature>
<feature type="binding site" evidence="1">
    <location>
        <begin position="8"/>
        <end position="9"/>
    </location>
    <ligand>
        <name>ATP</name>
        <dbReference type="ChEBI" id="CHEBI:30616"/>
    </ligand>
</feature>
<feature type="binding site" evidence="1">
    <location>
        <position position="8"/>
    </location>
    <ligand>
        <name>substrate</name>
    </ligand>
</feature>
<feature type="binding site" evidence="1">
    <location>
        <position position="16"/>
    </location>
    <ligand>
        <name>ATP</name>
        <dbReference type="ChEBI" id="CHEBI:30616"/>
    </ligand>
</feature>
<feature type="binding site" evidence="1">
    <location>
        <position position="40"/>
    </location>
    <ligand>
        <name>substrate</name>
    </ligand>
</feature>
<feature type="binding site" evidence="1">
    <location>
        <position position="72"/>
    </location>
    <ligand>
        <name>substrate</name>
    </ligand>
</feature>
<feature type="binding site" evidence="1">
    <location>
        <position position="86"/>
    </location>
    <ligand>
        <name>substrate</name>
    </ligand>
</feature>
<feature type="binding site" evidence="1">
    <location>
        <begin position="87"/>
        <end position="89"/>
    </location>
    <ligand>
        <name>ATP</name>
        <dbReference type="ChEBI" id="CHEBI:30616"/>
    </ligand>
</feature>
<feature type="binding site" evidence="1">
    <location>
        <position position="97"/>
    </location>
    <ligand>
        <name>ATP</name>
        <dbReference type="ChEBI" id="CHEBI:30616"/>
    </ligand>
</feature>
<feature type="binding site" evidence="1">
    <location>
        <begin position="122"/>
        <end position="128"/>
    </location>
    <ligand>
        <name>ATP</name>
        <dbReference type="ChEBI" id="CHEBI:30616"/>
    </ligand>
</feature>
<feature type="site" description="Transition state stabilizer" evidence="1">
    <location>
        <position position="16"/>
    </location>
</feature>
<protein>
    <recommendedName>
        <fullName evidence="1">Phosphopantetheine adenylyltransferase</fullName>
        <ecNumber evidence="1">2.7.7.3</ecNumber>
    </recommendedName>
    <alternativeName>
        <fullName evidence="1">Dephospho-CoA pyrophosphorylase</fullName>
    </alternativeName>
    <alternativeName>
        <fullName evidence="1">Pantetheine-phosphate adenylyltransferase</fullName>
        <shortName evidence="1">PPAT</shortName>
    </alternativeName>
</protein>
<reference key="1">
    <citation type="journal article" date="2005" name="PLoS Biol.">
        <title>Major structural differences and novel potential virulence mechanisms from the genomes of multiple Campylobacter species.</title>
        <authorList>
            <person name="Fouts D.E."/>
            <person name="Mongodin E.F."/>
            <person name="Mandrell R.E."/>
            <person name="Miller W.G."/>
            <person name="Rasko D.A."/>
            <person name="Ravel J."/>
            <person name="Brinkac L.M."/>
            <person name="DeBoy R.T."/>
            <person name="Parker C.T."/>
            <person name="Daugherty S.C."/>
            <person name="Dodson R.J."/>
            <person name="Durkin A.S."/>
            <person name="Madupu R."/>
            <person name="Sullivan S.A."/>
            <person name="Shetty J.U."/>
            <person name="Ayodeji M.A."/>
            <person name="Shvartsbeyn A."/>
            <person name="Schatz M.C."/>
            <person name="Badger J.H."/>
            <person name="Fraser C.M."/>
            <person name="Nelson K.E."/>
        </authorList>
    </citation>
    <scope>NUCLEOTIDE SEQUENCE [LARGE SCALE GENOMIC DNA]</scope>
    <source>
        <strain>RM1221</strain>
    </source>
</reference>
<proteinExistence type="inferred from homology"/>
<dbReference type="EC" id="2.7.7.3" evidence="1"/>
<dbReference type="EMBL" id="CP000025">
    <property type="protein sequence ID" value="AAW35195.1"/>
    <property type="molecule type" value="Genomic_DNA"/>
</dbReference>
<dbReference type="RefSeq" id="WP_002852633.1">
    <property type="nucleotide sequence ID" value="NC_003912.7"/>
</dbReference>
<dbReference type="SMR" id="Q5HV25"/>
<dbReference type="KEGG" id="cjr:CJE0858"/>
<dbReference type="HOGENOM" id="CLU_100149_0_1_7"/>
<dbReference type="UniPathway" id="UPA00241">
    <property type="reaction ID" value="UER00355"/>
</dbReference>
<dbReference type="GO" id="GO:0005737">
    <property type="term" value="C:cytoplasm"/>
    <property type="evidence" value="ECO:0007669"/>
    <property type="project" value="UniProtKB-SubCell"/>
</dbReference>
<dbReference type="GO" id="GO:0005524">
    <property type="term" value="F:ATP binding"/>
    <property type="evidence" value="ECO:0007669"/>
    <property type="project" value="UniProtKB-KW"/>
</dbReference>
<dbReference type="GO" id="GO:0004595">
    <property type="term" value="F:pantetheine-phosphate adenylyltransferase activity"/>
    <property type="evidence" value="ECO:0007669"/>
    <property type="project" value="UniProtKB-UniRule"/>
</dbReference>
<dbReference type="GO" id="GO:0015937">
    <property type="term" value="P:coenzyme A biosynthetic process"/>
    <property type="evidence" value="ECO:0007669"/>
    <property type="project" value="UniProtKB-UniRule"/>
</dbReference>
<dbReference type="CDD" id="cd02163">
    <property type="entry name" value="PPAT"/>
    <property type="match status" value="1"/>
</dbReference>
<dbReference type="Gene3D" id="3.40.50.620">
    <property type="entry name" value="HUPs"/>
    <property type="match status" value="1"/>
</dbReference>
<dbReference type="HAMAP" id="MF_00151">
    <property type="entry name" value="PPAT_bact"/>
    <property type="match status" value="1"/>
</dbReference>
<dbReference type="InterPro" id="IPR004821">
    <property type="entry name" value="Cyt_trans-like"/>
</dbReference>
<dbReference type="InterPro" id="IPR001980">
    <property type="entry name" value="PPAT"/>
</dbReference>
<dbReference type="InterPro" id="IPR014729">
    <property type="entry name" value="Rossmann-like_a/b/a_fold"/>
</dbReference>
<dbReference type="NCBIfam" id="TIGR01510">
    <property type="entry name" value="coaD_prev_kdtB"/>
    <property type="match status" value="1"/>
</dbReference>
<dbReference type="NCBIfam" id="TIGR00125">
    <property type="entry name" value="cyt_tran_rel"/>
    <property type="match status" value="1"/>
</dbReference>
<dbReference type="PANTHER" id="PTHR21342">
    <property type="entry name" value="PHOSPHOPANTETHEINE ADENYLYLTRANSFERASE"/>
    <property type="match status" value="1"/>
</dbReference>
<dbReference type="PANTHER" id="PTHR21342:SF1">
    <property type="entry name" value="PHOSPHOPANTETHEINE ADENYLYLTRANSFERASE"/>
    <property type="match status" value="1"/>
</dbReference>
<dbReference type="Pfam" id="PF01467">
    <property type="entry name" value="CTP_transf_like"/>
    <property type="match status" value="1"/>
</dbReference>
<dbReference type="PRINTS" id="PR01020">
    <property type="entry name" value="LPSBIOSNTHSS"/>
</dbReference>
<dbReference type="SUPFAM" id="SSF52374">
    <property type="entry name" value="Nucleotidylyl transferase"/>
    <property type="match status" value="1"/>
</dbReference>
<name>COAD_CAMJR</name>
<keyword id="KW-0067">ATP-binding</keyword>
<keyword id="KW-0173">Coenzyme A biosynthesis</keyword>
<keyword id="KW-0963">Cytoplasm</keyword>
<keyword id="KW-0460">Magnesium</keyword>
<keyword id="KW-0547">Nucleotide-binding</keyword>
<keyword id="KW-0548">Nucleotidyltransferase</keyword>
<keyword id="KW-0808">Transferase</keyword>
<gene>
    <name evidence="1" type="primary">coaD</name>
    <name type="ordered locus">CJE0858</name>
</gene>
<organism>
    <name type="scientific">Campylobacter jejuni (strain RM1221)</name>
    <dbReference type="NCBI Taxonomy" id="195099"/>
    <lineage>
        <taxon>Bacteria</taxon>
        <taxon>Pseudomonadati</taxon>
        <taxon>Campylobacterota</taxon>
        <taxon>Epsilonproteobacteria</taxon>
        <taxon>Campylobacterales</taxon>
        <taxon>Campylobacteraceae</taxon>
        <taxon>Campylobacter</taxon>
    </lineage>
</organism>
<comment type="function">
    <text evidence="1">Reversibly transfers an adenylyl group from ATP to 4'-phosphopantetheine, yielding dephospho-CoA (dPCoA) and pyrophosphate.</text>
</comment>
<comment type="catalytic activity">
    <reaction evidence="1">
        <text>(R)-4'-phosphopantetheine + ATP + H(+) = 3'-dephospho-CoA + diphosphate</text>
        <dbReference type="Rhea" id="RHEA:19801"/>
        <dbReference type="ChEBI" id="CHEBI:15378"/>
        <dbReference type="ChEBI" id="CHEBI:30616"/>
        <dbReference type="ChEBI" id="CHEBI:33019"/>
        <dbReference type="ChEBI" id="CHEBI:57328"/>
        <dbReference type="ChEBI" id="CHEBI:61723"/>
        <dbReference type="EC" id="2.7.7.3"/>
    </reaction>
</comment>
<comment type="cofactor">
    <cofactor evidence="1">
        <name>Mg(2+)</name>
        <dbReference type="ChEBI" id="CHEBI:18420"/>
    </cofactor>
</comment>
<comment type="pathway">
    <text evidence="1">Cofactor biosynthesis; coenzyme A biosynthesis; CoA from (R)-pantothenate: step 4/5.</text>
</comment>
<comment type="subunit">
    <text evidence="1">Homohexamer.</text>
</comment>
<comment type="subcellular location">
    <subcellularLocation>
        <location evidence="1">Cytoplasm</location>
    </subcellularLocation>
</comment>
<comment type="similarity">
    <text evidence="1">Belongs to the bacterial CoaD family.</text>
</comment>
<accession>Q5HV25</accession>